<protein>
    <recommendedName>
        <fullName evidence="2">DNA protection during starvation protein</fullName>
        <ecNumber evidence="2">1.16.-.-</ecNumber>
    </recommendedName>
</protein>
<proteinExistence type="inferred from homology"/>
<keyword id="KW-0963">Cytoplasm</keyword>
<keyword id="KW-0226">DNA condensation</keyword>
<keyword id="KW-0238">DNA-binding</keyword>
<keyword id="KW-0408">Iron</keyword>
<keyword id="KW-0409">Iron storage</keyword>
<keyword id="KW-0479">Metal-binding</keyword>
<keyword id="KW-0560">Oxidoreductase</keyword>
<reference key="1">
    <citation type="journal article" date="2004" name="Nat. Genet.">
        <title>Comparison of genome degradation in Paratyphi A and Typhi, human-restricted serovars of Salmonella enterica that cause typhoid.</title>
        <authorList>
            <person name="McClelland M."/>
            <person name="Sanderson K.E."/>
            <person name="Clifton S.W."/>
            <person name="Latreille P."/>
            <person name="Porwollik S."/>
            <person name="Sabo A."/>
            <person name="Meyer R."/>
            <person name="Bieri T."/>
            <person name="Ozersky P."/>
            <person name="McLellan M."/>
            <person name="Harkins C.R."/>
            <person name="Wang C."/>
            <person name="Nguyen C."/>
            <person name="Berghoff A."/>
            <person name="Elliott G."/>
            <person name="Kohlberg S."/>
            <person name="Strong C."/>
            <person name="Du F."/>
            <person name="Carter J."/>
            <person name="Kremizki C."/>
            <person name="Layman D."/>
            <person name="Leonard S."/>
            <person name="Sun H."/>
            <person name="Fulton L."/>
            <person name="Nash W."/>
            <person name="Miner T."/>
            <person name="Minx P."/>
            <person name="Delehaunty K."/>
            <person name="Fronick C."/>
            <person name="Magrini V."/>
            <person name="Nhan M."/>
            <person name="Warren W."/>
            <person name="Florea L."/>
            <person name="Spieth J."/>
            <person name="Wilson R.K."/>
        </authorList>
    </citation>
    <scope>NUCLEOTIDE SEQUENCE [LARGE SCALE GENOMIC DNA]</scope>
    <source>
        <strain>ATCC 9150 / SARB42</strain>
    </source>
</reference>
<feature type="initiator methionine" description="Removed" evidence="1">
    <location>
        <position position="1"/>
    </location>
</feature>
<feature type="chain" id="PRO_0000271590" description="DNA protection during starvation protein">
    <location>
        <begin position="2"/>
        <end position="167"/>
    </location>
</feature>
<feature type="binding site" evidence="2">
    <location>
        <position position="51"/>
    </location>
    <ligand>
        <name>Fe cation</name>
        <dbReference type="ChEBI" id="CHEBI:24875"/>
    </ligand>
</feature>
<feature type="binding site" evidence="2">
    <location>
        <position position="78"/>
    </location>
    <ligand>
        <name>Fe cation</name>
        <dbReference type="ChEBI" id="CHEBI:24875"/>
    </ligand>
</feature>
<feature type="binding site" evidence="2">
    <location>
        <position position="82"/>
    </location>
    <ligand>
        <name>Fe cation</name>
        <dbReference type="ChEBI" id="CHEBI:24875"/>
    </ligand>
</feature>
<name>DPS_SALPA</name>
<comment type="function">
    <text evidence="2">During stationary phase, binds the chromosome non-specifically, forming a highly ordered and stable dps-DNA co-crystal within which chromosomal DNA is condensed and protected from diverse damages. It protects DNA from oxidative damage by sequestering intracellular Fe(2+) ion and storing it in the form of Fe(3+) oxyhydroxide mineral, which can be released after reduction. One hydrogen peroxide oxidizes two Fe(2+) ions, which prevents hydroxyl radical production by the Fenton reaction.</text>
</comment>
<comment type="catalytic activity">
    <reaction evidence="2">
        <text>2 Fe(2+) + H2O2 + 2 H(+) = 2 Fe(3+) + 2 H2O</text>
        <dbReference type="Rhea" id="RHEA:48712"/>
        <dbReference type="ChEBI" id="CHEBI:15377"/>
        <dbReference type="ChEBI" id="CHEBI:15378"/>
        <dbReference type="ChEBI" id="CHEBI:16240"/>
        <dbReference type="ChEBI" id="CHEBI:29033"/>
        <dbReference type="ChEBI" id="CHEBI:29034"/>
    </reaction>
</comment>
<comment type="subunit">
    <text evidence="2">Homododecamer. The 12 subunits form a hollow sphere into which the mineral iron core of up to 500 Fe(3+) can be deposited.</text>
</comment>
<comment type="subcellular location">
    <subcellularLocation>
        <location evidence="2">Cytoplasm</location>
    </subcellularLocation>
</comment>
<comment type="similarity">
    <text evidence="2">Belongs to the Dps family.</text>
</comment>
<evidence type="ECO:0000250" key="1"/>
<evidence type="ECO:0000255" key="2">
    <source>
        <dbReference type="HAMAP-Rule" id="MF_01441"/>
    </source>
</evidence>
<sequence length="167" mass="18717">MSTAKLVKTKASNLLYTRNDVSESDKKATVELLNRQVIQFIDLSLITKQAHWNMRGANFIAVHEMLDGFRTALTDHLDTMAERAVQLGGVALGTTQVINSKTPLKSYPLDIHNVQDHLKELADRYAVVANDVRKAIGEAKDEDTADIFTAASRDLDKFLWFIESNIE</sequence>
<organism>
    <name type="scientific">Salmonella paratyphi A (strain ATCC 9150 / SARB42)</name>
    <dbReference type="NCBI Taxonomy" id="295319"/>
    <lineage>
        <taxon>Bacteria</taxon>
        <taxon>Pseudomonadati</taxon>
        <taxon>Pseudomonadota</taxon>
        <taxon>Gammaproteobacteria</taxon>
        <taxon>Enterobacterales</taxon>
        <taxon>Enterobacteriaceae</taxon>
        <taxon>Salmonella</taxon>
    </lineage>
</organism>
<dbReference type="EC" id="1.16.-.-" evidence="2"/>
<dbReference type="EMBL" id="CP000026">
    <property type="protein sequence ID" value="AAV77832.1"/>
    <property type="molecule type" value="Genomic_DNA"/>
</dbReference>
<dbReference type="RefSeq" id="WP_000100805.1">
    <property type="nucleotide sequence ID" value="NC_006511.1"/>
</dbReference>
<dbReference type="SMR" id="Q5PG12"/>
<dbReference type="KEGG" id="spt:SPA1922"/>
<dbReference type="HOGENOM" id="CLU_098183_1_2_6"/>
<dbReference type="Proteomes" id="UP000008185">
    <property type="component" value="Chromosome"/>
</dbReference>
<dbReference type="GO" id="GO:0005737">
    <property type="term" value="C:cytoplasm"/>
    <property type="evidence" value="ECO:0007669"/>
    <property type="project" value="UniProtKB-SubCell"/>
</dbReference>
<dbReference type="GO" id="GO:0003677">
    <property type="term" value="F:DNA binding"/>
    <property type="evidence" value="ECO:0007669"/>
    <property type="project" value="UniProtKB-UniRule"/>
</dbReference>
<dbReference type="GO" id="GO:0008199">
    <property type="term" value="F:ferric iron binding"/>
    <property type="evidence" value="ECO:0007669"/>
    <property type="project" value="UniProtKB-UniRule"/>
</dbReference>
<dbReference type="GO" id="GO:0016722">
    <property type="term" value="F:oxidoreductase activity, acting on metal ions"/>
    <property type="evidence" value="ECO:0007669"/>
    <property type="project" value="InterPro"/>
</dbReference>
<dbReference type="GO" id="GO:0030261">
    <property type="term" value="P:chromosome condensation"/>
    <property type="evidence" value="ECO:0007669"/>
    <property type="project" value="UniProtKB-KW"/>
</dbReference>
<dbReference type="GO" id="GO:0006879">
    <property type="term" value="P:intracellular iron ion homeostasis"/>
    <property type="evidence" value="ECO:0007669"/>
    <property type="project" value="UniProtKB-KW"/>
</dbReference>
<dbReference type="CDD" id="cd01043">
    <property type="entry name" value="DPS"/>
    <property type="match status" value="1"/>
</dbReference>
<dbReference type="FunFam" id="1.20.1260.10:FF:000003">
    <property type="entry name" value="DNA protection during starvation protein"/>
    <property type="match status" value="1"/>
</dbReference>
<dbReference type="Gene3D" id="1.20.1260.10">
    <property type="match status" value="1"/>
</dbReference>
<dbReference type="HAMAP" id="MF_01441">
    <property type="entry name" value="Dps"/>
    <property type="match status" value="1"/>
</dbReference>
<dbReference type="InterPro" id="IPR002177">
    <property type="entry name" value="DPS_DNA-bd"/>
</dbReference>
<dbReference type="InterPro" id="IPR023188">
    <property type="entry name" value="DPS_DNA-bd_CS"/>
</dbReference>
<dbReference type="InterPro" id="IPR023067">
    <property type="entry name" value="Dps_gammaproteobac"/>
</dbReference>
<dbReference type="InterPro" id="IPR012347">
    <property type="entry name" value="Ferritin-like"/>
</dbReference>
<dbReference type="InterPro" id="IPR009078">
    <property type="entry name" value="Ferritin-like_SF"/>
</dbReference>
<dbReference type="InterPro" id="IPR008331">
    <property type="entry name" value="Ferritin_DPS_dom"/>
</dbReference>
<dbReference type="NCBIfam" id="NF006975">
    <property type="entry name" value="PRK09448.1"/>
    <property type="match status" value="1"/>
</dbReference>
<dbReference type="PANTHER" id="PTHR42932:SF3">
    <property type="entry name" value="DNA PROTECTION DURING STARVATION PROTEIN"/>
    <property type="match status" value="1"/>
</dbReference>
<dbReference type="PANTHER" id="PTHR42932">
    <property type="entry name" value="GENERAL STRESS PROTEIN 20U"/>
    <property type="match status" value="1"/>
</dbReference>
<dbReference type="Pfam" id="PF00210">
    <property type="entry name" value="Ferritin"/>
    <property type="match status" value="1"/>
</dbReference>
<dbReference type="PIRSF" id="PIRSF005900">
    <property type="entry name" value="Dps"/>
    <property type="match status" value="1"/>
</dbReference>
<dbReference type="PRINTS" id="PR01346">
    <property type="entry name" value="HELNAPAPROT"/>
</dbReference>
<dbReference type="SUPFAM" id="SSF47240">
    <property type="entry name" value="Ferritin-like"/>
    <property type="match status" value="1"/>
</dbReference>
<dbReference type="PROSITE" id="PS00818">
    <property type="entry name" value="DPS_1"/>
    <property type="match status" value="1"/>
</dbReference>
<dbReference type="PROSITE" id="PS00819">
    <property type="entry name" value="DPS_2"/>
    <property type="match status" value="1"/>
</dbReference>
<accession>Q5PG12</accession>
<gene>
    <name evidence="2" type="primary">dps</name>
    <name type="ordered locus">SPA1922</name>
</gene>